<sequence>MAAKIKKGDKVVILTGKDKGKKGDVVAVFPKENKALVQGVNMVKRHEKPSQTATGGIVTREAKVHLSNIAIQDPKTGAPTRVGFKTLDDGRKVRFAKASGETIDG</sequence>
<accession>A7HWS2</accession>
<reference key="1">
    <citation type="journal article" date="2011" name="Stand. Genomic Sci.">
        <title>Complete genome sequence of Parvibaculum lavamentivorans type strain (DS-1(T)).</title>
        <authorList>
            <person name="Schleheck D."/>
            <person name="Weiss M."/>
            <person name="Pitluck S."/>
            <person name="Bruce D."/>
            <person name="Land M.L."/>
            <person name="Han S."/>
            <person name="Saunders E."/>
            <person name="Tapia R."/>
            <person name="Detter C."/>
            <person name="Brettin T."/>
            <person name="Han J."/>
            <person name="Woyke T."/>
            <person name="Goodwin L."/>
            <person name="Pennacchio L."/>
            <person name="Nolan M."/>
            <person name="Cook A.M."/>
            <person name="Kjelleberg S."/>
            <person name="Thomas T."/>
        </authorList>
    </citation>
    <scope>NUCLEOTIDE SEQUENCE [LARGE SCALE GENOMIC DNA]</scope>
    <source>
        <strain>DS-1 / DSM 13023 / NCIMB 13966</strain>
    </source>
</reference>
<gene>
    <name evidence="1" type="primary">rplX</name>
    <name type="ordered locus">Plav_2747</name>
</gene>
<keyword id="KW-1185">Reference proteome</keyword>
<keyword id="KW-0687">Ribonucleoprotein</keyword>
<keyword id="KW-0689">Ribosomal protein</keyword>
<keyword id="KW-0694">RNA-binding</keyword>
<keyword id="KW-0699">rRNA-binding</keyword>
<feature type="chain" id="PRO_1000073261" description="Large ribosomal subunit protein uL24">
    <location>
        <begin position="1"/>
        <end position="105"/>
    </location>
</feature>
<protein>
    <recommendedName>
        <fullName evidence="1">Large ribosomal subunit protein uL24</fullName>
    </recommendedName>
    <alternativeName>
        <fullName evidence="2">50S ribosomal protein L24</fullName>
    </alternativeName>
</protein>
<evidence type="ECO:0000255" key="1">
    <source>
        <dbReference type="HAMAP-Rule" id="MF_01326"/>
    </source>
</evidence>
<evidence type="ECO:0000305" key="2"/>
<organism>
    <name type="scientific">Parvibaculum lavamentivorans (strain DS-1 / DSM 13023 / NCIMB 13966)</name>
    <dbReference type="NCBI Taxonomy" id="402881"/>
    <lineage>
        <taxon>Bacteria</taxon>
        <taxon>Pseudomonadati</taxon>
        <taxon>Pseudomonadota</taxon>
        <taxon>Alphaproteobacteria</taxon>
        <taxon>Hyphomicrobiales</taxon>
        <taxon>Parvibaculaceae</taxon>
        <taxon>Parvibaculum</taxon>
    </lineage>
</organism>
<proteinExistence type="inferred from homology"/>
<dbReference type="EMBL" id="CP000774">
    <property type="protein sequence ID" value="ABS64355.1"/>
    <property type="molecule type" value="Genomic_DNA"/>
</dbReference>
<dbReference type="RefSeq" id="WP_012111669.1">
    <property type="nucleotide sequence ID" value="NC_009719.1"/>
</dbReference>
<dbReference type="SMR" id="A7HWS2"/>
<dbReference type="STRING" id="402881.Plav_2747"/>
<dbReference type="KEGG" id="pla:Plav_2747"/>
<dbReference type="eggNOG" id="COG0198">
    <property type="taxonomic scope" value="Bacteria"/>
</dbReference>
<dbReference type="HOGENOM" id="CLU_093315_2_0_5"/>
<dbReference type="OrthoDB" id="9807419at2"/>
<dbReference type="Proteomes" id="UP000006377">
    <property type="component" value="Chromosome"/>
</dbReference>
<dbReference type="GO" id="GO:1990904">
    <property type="term" value="C:ribonucleoprotein complex"/>
    <property type="evidence" value="ECO:0007669"/>
    <property type="project" value="UniProtKB-KW"/>
</dbReference>
<dbReference type="GO" id="GO:0005840">
    <property type="term" value="C:ribosome"/>
    <property type="evidence" value="ECO:0007669"/>
    <property type="project" value="UniProtKB-KW"/>
</dbReference>
<dbReference type="GO" id="GO:0019843">
    <property type="term" value="F:rRNA binding"/>
    <property type="evidence" value="ECO:0007669"/>
    <property type="project" value="UniProtKB-UniRule"/>
</dbReference>
<dbReference type="GO" id="GO:0003735">
    <property type="term" value="F:structural constituent of ribosome"/>
    <property type="evidence" value="ECO:0007669"/>
    <property type="project" value="InterPro"/>
</dbReference>
<dbReference type="GO" id="GO:0006412">
    <property type="term" value="P:translation"/>
    <property type="evidence" value="ECO:0007669"/>
    <property type="project" value="UniProtKB-UniRule"/>
</dbReference>
<dbReference type="CDD" id="cd06089">
    <property type="entry name" value="KOW_RPL26"/>
    <property type="match status" value="1"/>
</dbReference>
<dbReference type="FunFam" id="2.30.30.30:FF:000004">
    <property type="entry name" value="50S ribosomal protein L24"/>
    <property type="match status" value="1"/>
</dbReference>
<dbReference type="Gene3D" id="2.30.30.30">
    <property type="match status" value="1"/>
</dbReference>
<dbReference type="HAMAP" id="MF_01326_B">
    <property type="entry name" value="Ribosomal_uL24_B"/>
    <property type="match status" value="1"/>
</dbReference>
<dbReference type="InterPro" id="IPR005824">
    <property type="entry name" value="KOW"/>
</dbReference>
<dbReference type="InterPro" id="IPR014722">
    <property type="entry name" value="Rib_uL2_dom2"/>
</dbReference>
<dbReference type="InterPro" id="IPR003256">
    <property type="entry name" value="Ribosomal_uL24"/>
</dbReference>
<dbReference type="InterPro" id="IPR005825">
    <property type="entry name" value="Ribosomal_uL24_CS"/>
</dbReference>
<dbReference type="InterPro" id="IPR041988">
    <property type="entry name" value="Ribosomal_uL24_KOW"/>
</dbReference>
<dbReference type="InterPro" id="IPR008991">
    <property type="entry name" value="Translation_prot_SH3-like_sf"/>
</dbReference>
<dbReference type="NCBIfam" id="TIGR01079">
    <property type="entry name" value="rplX_bact"/>
    <property type="match status" value="1"/>
</dbReference>
<dbReference type="PANTHER" id="PTHR12903">
    <property type="entry name" value="MITOCHONDRIAL RIBOSOMAL PROTEIN L24"/>
    <property type="match status" value="1"/>
</dbReference>
<dbReference type="Pfam" id="PF00467">
    <property type="entry name" value="KOW"/>
    <property type="match status" value="1"/>
</dbReference>
<dbReference type="Pfam" id="PF17136">
    <property type="entry name" value="ribosomal_L24"/>
    <property type="match status" value="1"/>
</dbReference>
<dbReference type="SMART" id="SM00739">
    <property type="entry name" value="KOW"/>
    <property type="match status" value="1"/>
</dbReference>
<dbReference type="SUPFAM" id="SSF50104">
    <property type="entry name" value="Translation proteins SH3-like domain"/>
    <property type="match status" value="1"/>
</dbReference>
<dbReference type="PROSITE" id="PS01108">
    <property type="entry name" value="RIBOSOMAL_L24"/>
    <property type="match status" value="1"/>
</dbReference>
<name>RL24_PARL1</name>
<comment type="function">
    <text evidence="1">One of two assembly initiator proteins, it binds directly to the 5'-end of the 23S rRNA, where it nucleates assembly of the 50S subunit.</text>
</comment>
<comment type="function">
    <text evidence="1">One of the proteins that surrounds the polypeptide exit tunnel on the outside of the subunit.</text>
</comment>
<comment type="subunit">
    <text evidence="1">Part of the 50S ribosomal subunit.</text>
</comment>
<comment type="similarity">
    <text evidence="1">Belongs to the universal ribosomal protein uL24 family.</text>
</comment>